<gene>
    <name evidence="1" type="primary">argE</name>
    <name type="ordered locus">PMI3236</name>
</gene>
<reference key="1">
    <citation type="journal article" date="2008" name="J. Bacteriol.">
        <title>Complete genome sequence of uropathogenic Proteus mirabilis, a master of both adherence and motility.</title>
        <authorList>
            <person name="Pearson M.M."/>
            <person name="Sebaihia M."/>
            <person name="Churcher C."/>
            <person name="Quail M.A."/>
            <person name="Seshasayee A.S."/>
            <person name="Luscombe N.M."/>
            <person name="Abdellah Z."/>
            <person name="Arrosmith C."/>
            <person name="Atkin B."/>
            <person name="Chillingworth T."/>
            <person name="Hauser H."/>
            <person name="Jagels K."/>
            <person name="Moule S."/>
            <person name="Mungall K."/>
            <person name="Norbertczak H."/>
            <person name="Rabbinowitsch E."/>
            <person name="Walker D."/>
            <person name="Whithead S."/>
            <person name="Thomson N.R."/>
            <person name="Rather P.N."/>
            <person name="Parkhill J."/>
            <person name="Mobley H.L.T."/>
        </authorList>
    </citation>
    <scope>NUCLEOTIDE SEQUENCE [LARGE SCALE GENOMIC DNA]</scope>
    <source>
        <strain>HI4320</strain>
    </source>
</reference>
<evidence type="ECO:0000255" key="1">
    <source>
        <dbReference type="HAMAP-Rule" id="MF_01108"/>
    </source>
</evidence>
<accession>B4F192</accession>
<organism>
    <name type="scientific">Proteus mirabilis (strain HI4320)</name>
    <dbReference type="NCBI Taxonomy" id="529507"/>
    <lineage>
        <taxon>Bacteria</taxon>
        <taxon>Pseudomonadati</taxon>
        <taxon>Pseudomonadota</taxon>
        <taxon>Gammaproteobacteria</taxon>
        <taxon>Enterobacterales</taxon>
        <taxon>Morganellaceae</taxon>
        <taxon>Proteus</taxon>
    </lineage>
</organism>
<comment type="function">
    <text evidence="1">Catalyzes the hydrolysis of the amide bond of N(2)-acetylated L-amino acids. Cleaves the acetyl group from N-acetyl-L-ornithine to form L-ornithine, an intermediate in L-arginine biosynthesis pathway, and a branchpoint in the synthesis of polyamines.</text>
</comment>
<comment type="catalytic activity">
    <reaction evidence="1">
        <text>N(2)-acetyl-L-ornithine + H2O = L-ornithine + acetate</text>
        <dbReference type="Rhea" id="RHEA:15941"/>
        <dbReference type="ChEBI" id="CHEBI:15377"/>
        <dbReference type="ChEBI" id="CHEBI:30089"/>
        <dbReference type="ChEBI" id="CHEBI:46911"/>
        <dbReference type="ChEBI" id="CHEBI:57805"/>
        <dbReference type="EC" id="3.5.1.16"/>
    </reaction>
</comment>
<comment type="cofactor">
    <cofactor evidence="1">
        <name>Zn(2+)</name>
        <dbReference type="ChEBI" id="CHEBI:29105"/>
    </cofactor>
    <cofactor evidence="1">
        <name>Co(2+)</name>
        <dbReference type="ChEBI" id="CHEBI:48828"/>
    </cofactor>
    <text evidence="1">Binds 2 Zn(2+) or Co(2+) ions per subunit.</text>
</comment>
<comment type="cofactor">
    <cofactor evidence="1">
        <name>glutathione</name>
        <dbReference type="ChEBI" id="CHEBI:57925"/>
    </cofactor>
</comment>
<comment type="pathway">
    <text evidence="1">Amino-acid biosynthesis; L-arginine biosynthesis; L-ornithine from N(2)-acetyl-L-ornithine (linear): step 1/1.</text>
</comment>
<comment type="subunit">
    <text evidence="1">Homodimer.</text>
</comment>
<comment type="subcellular location">
    <subcellularLocation>
        <location evidence="1">Cytoplasm</location>
    </subcellularLocation>
</comment>
<comment type="similarity">
    <text evidence="1">Belongs to the peptidase M20A family. ArgE subfamily.</text>
</comment>
<protein>
    <recommendedName>
        <fullName evidence="1">Acetylornithine deacetylase</fullName>
        <shortName evidence="1">AO</shortName>
        <shortName evidence="1">Acetylornithinase</shortName>
        <ecNumber evidence="1">3.5.1.16</ecNumber>
    </recommendedName>
    <alternativeName>
        <fullName evidence="1">N-acetylornithinase</fullName>
        <shortName evidence="1">NAO</shortName>
    </alternativeName>
</protein>
<sequence length="387" mass="42600">MNIKLPTFIELYRQLIATPSISATDAKTDQSNEALINLLANWLETLGFSIEIQPVPETRGKFNLLATLGSGTGGLLLCGHTDTVPFDEGRWTQDPFTLTEKEGKLYGLGTADMKGFFAFIIDALRDIDTSQLTHPLYILATADEETSMAGARYFAANTAIRPDFAIIGEPTSLQPIRAHKGHLSNAIRITGQSGHSSDPEKGVNAIELMHESITHLSTLRDRLKTRYNNPAFVIPYPTMNFGYINGGDAANRICACCELHMDIRPLPGLTLQDLDDLLHETLAPVKARWPGRLSVEALHEPIPGYECPTDHKMVAVIEKLLGEKAQTVNYCTEAPFIQALCPTLVLGPGSIEQAHQPDEFIDMAFIEPTRELMGQLIENFCLAEKAK</sequence>
<proteinExistence type="inferred from homology"/>
<keyword id="KW-0028">Amino-acid biosynthesis</keyword>
<keyword id="KW-0055">Arginine biosynthesis</keyword>
<keyword id="KW-0170">Cobalt</keyword>
<keyword id="KW-0963">Cytoplasm</keyword>
<keyword id="KW-0378">Hydrolase</keyword>
<keyword id="KW-0479">Metal-binding</keyword>
<keyword id="KW-1185">Reference proteome</keyword>
<keyword id="KW-0862">Zinc</keyword>
<dbReference type="EC" id="3.5.1.16" evidence="1"/>
<dbReference type="EMBL" id="AM942759">
    <property type="protein sequence ID" value="CAR46337.1"/>
    <property type="molecule type" value="Genomic_DNA"/>
</dbReference>
<dbReference type="RefSeq" id="WP_004249893.1">
    <property type="nucleotide sequence ID" value="NC_010554.1"/>
</dbReference>
<dbReference type="SMR" id="B4F192"/>
<dbReference type="MEROPS" id="M20.974"/>
<dbReference type="EnsemblBacteria" id="CAR46337">
    <property type="protein sequence ID" value="CAR46337"/>
    <property type="gene ID" value="PMI3236"/>
</dbReference>
<dbReference type="GeneID" id="6802079"/>
<dbReference type="KEGG" id="pmr:PMI3236"/>
<dbReference type="eggNOG" id="COG0624">
    <property type="taxonomic scope" value="Bacteria"/>
</dbReference>
<dbReference type="HOGENOM" id="CLU_021802_2_4_6"/>
<dbReference type="UniPathway" id="UPA00068">
    <property type="reaction ID" value="UER00110"/>
</dbReference>
<dbReference type="Proteomes" id="UP000008319">
    <property type="component" value="Chromosome"/>
</dbReference>
<dbReference type="GO" id="GO:0005737">
    <property type="term" value="C:cytoplasm"/>
    <property type="evidence" value="ECO:0007669"/>
    <property type="project" value="UniProtKB-SubCell"/>
</dbReference>
<dbReference type="GO" id="GO:0008777">
    <property type="term" value="F:acetylornithine deacetylase activity"/>
    <property type="evidence" value="ECO:0007669"/>
    <property type="project" value="UniProtKB-UniRule"/>
</dbReference>
<dbReference type="GO" id="GO:0008270">
    <property type="term" value="F:zinc ion binding"/>
    <property type="evidence" value="ECO:0007669"/>
    <property type="project" value="UniProtKB-UniRule"/>
</dbReference>
<dbReference type="GO" id="GO:0006526">
    <property type="term" value="P:L-arginine biosynthetic process"/>
    <property type="evidence" value="ECO:0007669"/>
    <property type="project" value="UniProtKB-UniRule"/>
</dbReference>
<dbReference type="CDD" id="cd03894">
    <property type="entry name" value="M20_ArgE"/>
    <property type="match status" value="1"/>
</dbReference>
<dbReference type="FunFam" id="3.30.70.360:FF:000003">
    <property type="entry name" value="Acetylornithine deacetylase"/>
    <property type="match status" value="1"/>
</dbReference>
<dbReference type="Gene3D" id="3.30.70.360">
    <property type="match status" value="1"/>
</dbReference>
<dbReference type="Gene3D" id="3.40.630.10">
    <property type="entry name" value="Zn peptidases"/>
    <property type="match status" value="1"/>
</dbReference>
<dbReference type="HAMAP" id="MF_01108">
    <property type="entry name" value="ArgE"/>
    <property type="match status" value="1"/>
</dbReference>
<dbReference type="InterPro" id="IPR010169">
    <property type="entry name" value="AcOrn-deacetyl"/>
</dbReference>
<dbReference type="InterPro" id="IPR001261">
    <property type="entry name" value="ArgE/DapE_CS"/>
</dbReference>
<dbReference type="InterPro" id="IPR036264">
    <property type="entry name" value="Bact_exopeptidase_dim_dom"/>
</dbReference>
<dbReference type="InterPro" id="IPR002933">
    <property type="entry name" value="Peptidase_M20"/>
</dbReference>
<dbReference type="InterPro" id="IPR011650">
    <property type="entry name" value="Peptidase_M20_dimer"/>
</dbReference>
<dbReference type="InterPro" id="IPR050072">
    <property type="entry name" value="Peptidase_M20A"/>
</dbReference>
<dbReference type="NCBIfam" id="TIGR01892">
    <property type="entry name" value="AcOrn-deacetyl"/>
    <property type="match status" value="1"/>
</dbReference>
<dbReference type="NCBIfam" id="NF003474">
    <property type="entry name" value="PRK05111.1"/>
    <property type="match status" value="1"/>
</dbReference>
<dbReference type="PANTHER" id="PTHR43808">
    <property type="entry name" value="ACETYLORNITHINE DEACETYLASE"/>
    <property type="match status" value="1"/>
</dbReference>
<dbReference type="PANTHER" id="PTHR43808:SF1">
    <property type="entry name" value="ACETYLORNITHINE DEACETYLASE"/>
    <property type="match status" value="1"/>
</dbReference>
<dbReference type="Pfam" id="PF07687">
    <property type="entry name" value="M20_dimer"/>
    <property type="match status" value="1"/>
</dbReference>
<dbReference type="Pfam" id="PF01546">
    <property type="entry name" value="Peptidase_M20"/>
    <property type="match status" value="1"/>
</dbReference>
<dbReference type="SUPFAM" id="SSF55031">
    <property type="entry name" value="Bacterial exopeptidase dimerisation domain"/>
    <property type="match status" value="1"/>
</dbReference>
<dbReference type="SUPFAM" id="SSF53187">
    <property type="entry name" value="Zn-dependent exopeptidases"/>
    <property type="match status" value="1"/>
</dbReference>
<dbReference type="PROSITE" id="PS00758">
    <property type="entry name" value="ARGE_DAPE_CPG2_1"/>
    <property type="match status" value="1"/>
</dbReference>
<dbReference type="PROSITE" id="PS00759">
    <property type="entry name" value="ARGE_DAPE_CPG2_2"/>
    <property type="match status" value="1"/>
</dbReference>
<name>ARGE_PROMH</name>
<feature type="chain" id="PRO_1000137072" description="Acetylornithine deacetylase">
    <location>
        <begin position="1"/>
        <end position="387"/>
    </location>
</feature>
<feature type="active site" evidence="1">
    <location>
        <position position="82"/>
    </location>
</feature>
<feature type="active site" evidence="1">
    <location>
        <position position="144"/>
    </location>
</feature>
<feature type="binding site" evidence="1">
    <location>
        <position position="80"/>
    </location>
    <ligand>
        <name>Zn(2+)</name>
        <dbReference type="ChEBI" id="CHEBI:29105"/>
        <label>1</label>
    </ligand>
</feature>
<feature type="binding site" evidence="1">
    <location>
        <position position="112"/>
    </location>
    <ligand>
        <name>Zn(2+)</name>
        <dbReference type="ChEBI" id="CHEBI:29105"/>
        <label>1</label>
    </ligand>
</feature>
<feature type="binding site" evidence="1">
    <location>
        <position position="112"/>
    </location>
    <ligand>
        <name>Zn(2+)</name>
        <dbReference type="ChEBI" id="CHEBI:29105"/>
        <label>2</label>
    </ligand>
</feature>
<feature type="binding site" evidence="1">
    <location>
        <position position="145"/>
    </location>
    <ligand>
        <name>Zn(2+)</name>
        <dbReference type="ChEBI" id="CHEBI:29105"/>
        <label>2</label>
    </ligand>
</feature>
<feature type="binding site" evidence="1">
    <location>
        <position position="169"/>
    </location>
    <ligand>
        <name>Zn(2+)</name>
        <dbReference type="ChEBI" id="CHEBI:29105"/>
        <label>1</label>
    </ligand>
</feature>
<feature type="binding site" evidence="1">
    <location>
        <position position="355"/>
    </location>
    <ligand>
        <name>Zn(2+)</name>
        <dbReference type="ChEBI" id="CHEBI:29105"/>
        <label>2</label>
    </ligand>
</feature>